<feature type="chain" id="PRO_0000227789" description="Protein-lysine N-trimethyltransferase SMYD5">
    <location>
        <begin position="1"/>
        <end position="416"/>
    </location>
</feature>
<feature type="domain" description="SET" evidence="2">
    <location>
        <begin position="21"/>
        <end position="351"/>
    </location>
</feature>
<feature type="zinc finger region" description="MYND-type">
    <location>
        <begin position="98"/>
        <end position="136"/>
    </location>
</feature>
<feature type="region of interest" description="Disordered" evidence="3">
    <location>
        <begin position="383"/>
        <end position="416"/>
    </location>
</feature>
<feature type="binding site" evidence="2">
    <location>
        <position position="350"/>
    </location>
    <ligand>
        <name>S-adenosyl-L-methionine</name>
        <dbReference type="ChEBI" id="CHEBI:59789"/>
    </ligand>
</feature>
<feature type="sequence conflict" description="In Ref. 1; BAE34438." evidence="14" ref="1">
    <original>C</original>
    <variation>R</variation>
    <location>
        <position position="354"/>
    </location>
</feature>
<name>SMYD5_MOUSE</name>
<proteinExistence type="evidence at protein level"/>
<protein>
    <recommendedName>
        <fullName evidence="14">Protein-lysine N-trimethyltransferase SMYD5</fullName>
        <ecNumber evidence="1">2.1.1.-</ecNumber>
    </recommendedName>
    <alternativeName>
        <fullName>Protein NN8-4AG</fullName>
    </alternativeName>
    <alternativeName>
        <fullName evidence="13">Retinoic acid-induced protein 15</fullName>
    </alternativeName>
    <alternativeName>
        <fullName>SET and MYND domain-containing protein 5</fullName>
    </alternativeName>
    <alternativeName>
        <fullName>[histone H3]-lysine20 N-trimethyltransferase SMYD5</fullName>
        <ecNumber evidence="15 16">2.1.1.372</ecNumber>
    </alternativeName>
    <alternativeName>
        <fullName>[histone H4]-lysine36 N-trimethyltransferase SMYD5</fullName>
        <ecNumber evidence="17 18">2.1.1.359</ecNumber>
    </alternativeName>
</protein>
<organism>
    <name type="scientific">Mus musculus</name>
    <name type="common">Mouse</name>
    <dbReference type="NCBI Taxonomy" id="10090"/>
    <lineage>
        <taxon>Eukaryota</taxon>
        <taxon>Metazoa</taxon>
        <taxon>Chordata</taxon>
        <taxon>Craniata</taxon>
        <taxon>Vertebrata</taxon>
        <taxon>Euteleostomi</taxon>
        <taxon>Mammalia</taxon>
        <taxon>Eutheria</taxon>
        <taxon>Euarchontoglires</taxon>
        <taxon>Glires</taxon>
        <taxon>Rodentia</taxon>
        <taxon>Myomorpha</taxon>
        <taxon>Muroidea</taxon>
        <taxon>Muridae</taxon>
        <taxon>Murinae</taxon>
        <taxon>Mus</taxon>
        <taxon>Mus</taxon>
    </lineage>
</organism>
<comment type="function">
    <text evidence="1 4 5 6 7 9">Protein-lysine N-trimethyltransferase that specifically catalyzes trimethylation of 'Lys-22' of the RPL40/eL40 subunit of the 60S ribosome, thereby promoting translation elongation and protein synthesis (By similarity). May also act as a histone methyltransferase in the context of histone octamers, but not on nucleosome substrates: trimethylates 'Lys-36' of histone H3 and 'Lys-20' of histone H4 to form H3K36me3 and H4K20me3, respectively (PubMed:22921934, PubMed:28250819, PubMed:35680905, PubMed:39083378). The histone methyltransferase activity, which is independent of its SET domain, is however unsure in vivo (By similarity). In association with the NCoR corepressor complex, involved in the repression of toll-like receptor 4 (TLR4)-target inflammatory genes in macrophages, possibly by catalyzing the formation of H4K20me3 at the gene promoters (PubMed:22921934). Plays an important role in embryonic stem (ES) cell self-renewal and differentiation (PubMed:28951459). Maintains genome stability of ES cells during differentiation through regulation of heterochromatin formation and repression of endogenous repetitive DNA elements by promoting H4K20me3 marks (PubMed:28250819). Acts as a regulator of the hypothermia response: its degradation in response to mild hypothermia relieves the formation of H3K36me3 at gene promoters, allowing expression of the neuroprotective gene SP1 (PubMed:39083378).</text>
</comment>
<comment type="catalytic activity">
    <reaction evidence="1">
        <text>L-lysyl-[protein] + 3 S-adenosyl-L-methionine = N(6),N(6),N(6)-trimethyl-L-lysyl-[protein] + 3 S-adenosyl-L-homocysteine + 3 H(+)</text>
        <dbReference type="Rhea" id="RHEA:54192"/>
        <dbReference type="Rhea" id="RHEA-COMP:9752"/>
        <dbReference type="Rhea" id="RHEA-COMP:13826"/>
        <dbReference type="ChEBI" id="CHEBI:15378"/>
        <dbReference type="ChEBI" id="CHEBI:29969"/>
        <dbReference type="ChEBI" id="CHEBI:57856"/>
        <dbReference type="ChEBI" id="CHEBI:59789"/>
        <dbReference type="ChEBI" id="CHEBI:61961"/>
    </reaction>
    <physiologicalReaction direction="left-to-right" evidence="1">
        <dbReference type="Rhea" id="RHEA:54193"/>
    </physiologicalReaction>
</comment>
<comment type="catalytic activity">
    <reaction evidence="15 16">
        <text>L-lysyl(20)-[histone H4] + 3 S-adenosyl-L-methionine = N(6),N(6),N(6)-trimethyl-L-lysyl(20)-[histone H4] + 3 S-adenosyl-L-homocysteine + 3 H(+)</text>
        <dbReference type="Rhea" id="RHEA:64456"/>
        <dbReference type="Rhea" id="RHEA-COMP:15554"/>
        <dbReference type="Rhea" id="RHEA-COMP:15998"/>
        <dbReference type="ChEBI" id="CHEBI:15378"/>
        <dbReference type="ChEBI" id="CHEBI:29969"/>
        <dbReference type="ChEBI" id="CHEBI:57856"/>
        <dbReference type="ChEBI" id="CHEBI:59789"/>
        <dbReference type="ChEBI" id="CHEBI:61961"/>
        <dbReference type="EC" id="2.1.1.372"/>
    </reaction>
</comment>
<comment type="catalytic activity">
    <reaction evidence="17 18">
        <text>L-lysyl(36)-[histone H3] + 3 S-adenosyl-L-methionine = N(6),N(6),N(6)-trimethyl-L-lysyl(36)-[histone H3] + 3 S-adenosyl-L-homocysteine + 3 H(+)</text>
        <dbReference type="Rhea" id="RHEA:60324"/>
        <dbReference type="Rhea" id="RHEA-COMP:9785"/>
        <dbReference type="Rhea" id="RHEA-COMP:15536"/>
        <dbReference type="ChEBI" id="CHEBI:15378"/>
        <dbReference type="ChEBI" id="CHEBI:29969"/>
        <dbReference type="ChEBI" id="CHEBI:57856"/>
        <dbReference type="ChEBI" id="CHEBI:59789"/>
        <dbReference type="ChEBI" id="CHEBI:61961"/>
        <dbReference type="EC" id="2.1.1.359"/>
    </reaction>
</comment>
<comment type="subunit">
    <text evidence="4 5">Interacts with the N-CoR complex (PubMed:22921934). Interacts with EHMT2 and CBX5 (PubMed:28250819).</text>
</comment>
<comment type="subcellular location">
    <subcellularLocation>
        <location evidence="1">Cytoplasm</location>
    </subcellularLocation>
</comment>
<comment type="induction">
    <text evidence="11">Up-regulated by retinoic acid treatment in embryonic carcinoma cells. Present at low levels in untreated cells.</text>
</comment>
<comment type="PTM">
    <text evidence="9">Ubiquitinated and degradaed by the proteasome in response to mild hypothermia (32 degrees Celsius), relieving repression of the SP1 gene.</text>
</comment>
<comment type="disruption phenotype">
    <text evidence="8 10">Mice develop normally and are fertile (PubMed:39048817, PubMed:39103523). Conditional deletion in the stomach inhibits malignant progression in a mouse model of gastric cancer (PubMed:39048817).</text>
</comment>
<comment type="similarity">
    <text evidence="2">Belongs to the class V-like SAM-binding methyltransferase superfamily.</text>
</comment>
<comment type="sequence caution" evidence="14">
    <conflict type="erroneous initiation">
        <sequence resource="EMBL-CDS" id="AAH16525"/>
    </conflict>
</comment>
<dbReference type="EC" id="2.1.1.-" evidence="1"/>
<dbReference type="EC" id="2.1.1.372" evidence="15 16"/>
<dbReference type="EC" id="2.1.1.359" evidence="17 18"/>
<dbReference type="EMBL" id="AK158267">
    <property type="protein sequence ID" value="BAE34438.1"/>
    <property type="molecule type" value="mRNA"/>
</dbReference>
<dbReference type="EMBL" id="AK162926">
    <property type="protein sequence ID" value="BAE37118.1"/>
    <property type="molecule type" value="mRNA"/>
</dbReference>
<dbReference type="EMBL" id="BC016525">
    <property type="protein sequence ID" value="AAH16525.1"/>
    <property type="status" value="ALT_INIT"/>
    <property type="molecule type" value="mRNA"/>
</dbReference>
<dbReference type="CCDS" id="CCDS51827.1"/>
<dbReference type="RefSeq" id="NP_659167.2">
    <property type="nucleotide sequence ID" value="NM_144918.2"/>
</dbReference>
<dbReference type="FunCoup" id="Q3TYX3">
    <property type="interactions" value="359"/>
</dbReference>
<dbReference type="STRING" id="10090.ENSMUSP00000048537"/>
<dbReference type="GlyGen" id="Q3TYX3">
    <property type="glycosylation" value="1 site, 1 N-linked glycan (1 site)"/>
</dbReference>
<dbReference type="iPTMnet" id="Q3TYX3"/>
<dbReference type="PhosphoSitePlus" id="Q3TYX3"/>
<dbReference type="SwissPalm" id="Q3TYX3"/>
<dbReference type="jPOST" id="Q3TYX3"/>
<dbReference type="PaxDb" id="10090-ENSMUSP00000048537"/>
<dbReference type="PeptideAtlas" id="Q3TYX3"/>
<dbReference type="ProteomicsDB" id="261463"/>
<dbReference type="Pumba" id="Q3TYX3"/>
<dbReference type="Antibodypedia" id="31318">
    <property type="antibodies" value="223 antibodies from 26 providers"/>
</dbReference>
<dbReference type="Ensembl" id="ENSMUST00000045693.8">
    <property type="protein sequence ID" value="ENSMUSP00000048537.8"/>
    <property type="gene ID" value="ENSMUSG00000033706.14"/>
</dbReference>
<dbReference type="GeneID" id="232187"/>
<dbReference type="KEGG" id="mmu:232187"/>
<dbReference type="UCSC" id="uc009cpq.1">
    <property type="organism name" value="mouse"/>
</dbReference>
<dbReference type="AGR" id="MGI:108048"/>
<dbReference type="CTD" id="10322"/>
<dbReference type="MGI" id="MGI:108048">
    <property type="gene designation" value="Smyd5"/>
</dbReference>
<dbReference type="VEuPathDB" id="HostDB:ENSMUSG00000033706"/>
<dbReference type="eggNOG" id="KOG2084">
    <property type="taxonomic scope" value="Eukaryota"/>
</dbReference>
<dbReference type="GeneTree" id="ENSGT00510000047420"/>
<dbReference type="HOGENOM" id="CLU_054216_0_0_1"/>
<dbReference type="InParanoid" id="Q3TYX3"/>
<dbReference type="OMA" id="LMAMYQQ"/>
<dbReference type="OrthoDB" id="438641at2759"/>
<dbReference type="PhylomeDB" id="Q3TYX3"/>
<dbReference type="TreeFam" id="TF106419"/>
<dbReference type="BioGRID-ORCS" id="232187">
    <property type="hits" value="1 hit in 79 CRISPR screens"/>
</dbReference>
<dbReference type="PRO" id="PR:Q3TYX3"/>
<dbReference type="Proteomes" id="UP000000589">
    <property type="component" value="Chromosome 6"/>
</dbReference>
<dbReference type="RNAct" id="Q3TYX3">
    <property type="molecule type" value="protein"/>
</dbReference>
<dbReference type="Bgee" id="ENSMUSG00000033706">
    <property type="expression patterns" value="Expressed in otic placode and 230 other cell types or tissues"/>
</dbReference>
<dbReference type="GO" id="GO:0005737">
    <property type="term" value="C:cytoplasm"/>
    <property type="evidence" value="ECO:0000250"/>
    <property type="project" value="UniProtKB"/>
</dbReference>
<dbReference type="GO" id="GO:0140955">
    <property type="term" value="F:histone H3K36 trimethyltransferase activity"/>
    <property type="evidence" value="ECO:0000314"/>
    <property type="project" value="UniProtKB"/>
</dbReference>
<dbReference type="GO" id="GO:0042799">
    <property type="term" value="F:histone H4K20 methyltransferase activity"/>
    <property type="evidence" value="ECO:0000315"/>
    <property type="project" value="UniProtKB"/>
</dbReference>
<dbReference type="GO" id="GO:0140943">
    <property type="term" value="F:histone H4K20 trimethyltransferase activity"/>
    <property type="evidence" value="ECO:0007669"/>
    <property type="project" value="RHEA"/>
</dbReference>
<dbReference type="GO" id="GO:0016279">
    <property type="term" value="F:protein-lysine N-methyltransferase activity"/>
    <property type="evidence" value="ECO:0000250"/>
    <property type="project" value="UniProtKB"/>
</dbReference>
<dbReference type="GO" id="GO:0008270">
    <property type="term" value="F:zinc ion binding"/>
    <property type="evidence" value="ECO:0007669"/>
    <property type="project" value="UniProtKB-KW"/>
</dbReference>
<dbReference type="GO" id="GO:0032259">
    <property type="term" value="P:methylation"/>
    <property type="evidence" value="ECO:0007669"/>
    <property type="project" value="UniProtKB-KW"/>
</dbReference>
<dbReference type="GO" id="GO:0045814">
    <property type="term" value="P:negative regulation of gene expression, epigenetic"/>
    <property type="evidence" value="ECO:0000315"/>
    <property type="project" value="UniProtKB"/>
</dbReference>
<dbReference type="GO" id="GO:1900249">
    <property type="term" value="P:positive regulation of cytoplasmic translational elongation"/>
    <property type="evidence" value="ECO:0000250"/>
    <property type="project" value="UniProtKB"/>
</dbReference>
<dbReference type="GO" id="GO:2000736">
    <property type="term" value="P:regulation of stem cell differentiation"/>
    <property type="evidence" value="ECO:0000315"/>
    <property type="project" value="UniProtKB"/>
</dbReference>
<dbReference type="GO" id="GO:2000035">
    <property type="term" value="P:regulation of stem cell division"/>
    <property type="evidence" value="ECO:0000315"/>
    <property type="project" value="UniProtKB"/>
</dbReference>
<dbReference type="GO" id="GO:0141005">
    <property type="term" value="P:transposable element silencing by heterochromatin formation"/>
    <property type="evidence" value="ECO:0000315"/>
    <property type="project" value="UniProtKB"/>
</dbReference>
<dbReference type="CDD" id="cd10521">
    <property type="entry name" value="SET_SMYD5"/>
    <property type="match status" value="1"/>
</dbReference>
<dbReference type="FunFam" id="2.170.270.10:FF:000078">
    <property type="entry name" value="SMYD family member 5"/>
    <property type="match status" value="1"/>
</dbReference>
<dbReference type="Gene3D" id="2.170.270.10">
    <property type="entry name" value="SET domain"/>
    <property type="match status" value="1"/>
</dbReference>
<dbReference type="Gene3D" id="1.25.40.10">
    <property type="entry name" value="Tetratricopeptide repeat domain"/>
    <property type="match status" value="1"/>
</dbReference>
<dbReference type="InterPro" id="IPR001214">
    <property type="entry name" value="SET_dom"/>
</dbReference>
<dbReference type="InterPro" id="IPR046341">
    <property type="entry name" value="SET_dom_sf"/>
</dbReference>
<dbReference type="InterPro" id="IPR044422">
    <property type="entry name" value="SMYD5_SET"/>
</dbReference>
<dbReference type="InterPro" id="IPR011990">
    <property type="entry name" value="TPR-like_helical_dom_sf"/>
</dbReference>
<dbReference type="PANTHER" id="PTHR46402:SF2">
    <property type="entry name" value="HISTONE-LYSINE N-TRIMETHYLTRANSFERASE SMYD5"/>
    <property type="match status" value="1"/>
</dbReference>
<dbReference type="PANTHER" id="PTHR46402">
    <property type="entry name" value="SET AND MYND DOMAIN-CONTAINING PROTEIN 5"/>
    <property type="match status" value="1"/>
</dbReference>
<dbReference type="Pfam" id="PF00856">
    <property type="entry name" value="SET"/>
    <property type="match status" value="1"/>
</dbReference>
<dbReference type="SMART" id="SM00317">
    <property type="entry name" value="SET"/>
    <property type="match status" value="1"/>
</dbReference>
<dbReference type="SUPFAM" id="SSF82199">
    <property type="entry name" value="SET domain"/>
    <property type="match status" value="1"/>
</dbReference>
<dbReference type="PROSITE" id="PS50280">
    <property type="entry name" value="SET"/>
    <property type="match status" value="1"/>
</dbReference>
<evidence type="ECO:0000250" key="1">
    <source>
        <dbReference type="UniProtKB" id="Q6GMV2"/>
    </source>
</evidence>
<evidence type="ECO:0000255" key="2">
    <source>
        <dbReference type="PROSITE-ProRule" id="PRU00190"/>
    </source>
</evidence>
<evidence type="ECO:0000256" key="3">
    <source>
        <dbReference type="SAM" id="MobiDB-lite"/>
    </source>
</evidence>
<evidence type="ECO:0000269" key="4">
    <source>
    </source>
</evidence>
<evidence type="ECO:0000269" key="5">
    <source>
    </source>
</evidence>
<evidence type="ECO:0000269" key="6">
    <source>
    </source>
</evidence>
<evidence type="ECO:0000269" key="7">
    <source>
    </source>
</evidence>
<evidence type="ECO:0000269" key="8">
    <source>
    </source>
</evidence>
<evidence type="ECO:0000269" key="9">
    <source>
    </source>
</evidence>
<evidence type="ECO:0000269" key="10">
    <source>
    </source>
</evidence>
<evidence type="ECO:0000269" key="11">
    <source>
    </source>
</evidence>
<evidence type="ECO:0000303" key="12">
    <source>
    </source>
</evidence>
<evidence type="ECO:0000303" key="13">
    <source>
    </source>
</evidence>
<evidence type="ECO:0000305" key="14"/>
<evidence type="ECO:0000305" key="15">
    <source>
    </source>
</evidence>
<evidence type="ECO:0000305" key="16">
    <source>
    </source>
</evidence>
<evidence type="ECO:0000305" key="17">
    <source>
    </source>
</evidence>
<evidence type="ECO:0000305" key="18">
    <source>
    </source>
</evidence>
<evidence type="ECO:0000312" key="19">
    <source>
        <dbReference type="MGI" id="MGI:108048"/>
    </source>
</evidence>
<gene>
    <name evidence="12 19" type="primary">Smyd5</name>
    <name evidence="13" type="synonym">Rai15</name>
</gene>
<keyword id="KW-0963">Cytoplasm</keyword>
<keyword id="KW-0479">Metal-binding</keyword>
<keyword id="KW-0489">Methyltransferase</keyword>
<keyword id="KW-1185">Reference proteome</keyword>
<keyword id="KW-0949">S-adenosyl-L-methionine</keyword>
<keyword id="KW-0808">Transferase</keyword>
<keyword id="KW-0832">Ubl conjugation</keyword>
<keyword id="KW-0862">Zinc</keyword>
<keyword id="KW-0863">Zinc-finger</keyword>
<reference key="1">
    <citation type="journal article" date="2005" name="Science">
        <title>The transcriptional landscape of the mammalian genome.</title>
        <authorList>
            <person name="Carninci P."/>
            <person name="Kasukawa T."/>
            <person name="Katayama S."/>
            <person name="Gough J."/>
            <person name="Frith M.C."/>
            <person name="Maeda N."/>
            <person name="Oyama R."/>
            <person name="Ravasi T."/>
            <person name="Lenhard B."/>
            <person name="Wells C."/>
            <person name="Kodzius R."/>
            <person name="Shimokawa K."/>
            <person name="Bajic V.B."/>
            <person name="Brenner S.E."/>
            <person name="Batalov S."/>
            <person name="Forrest A.R."/>
            <person name="Zavolan M."/>
            <person name="Davis M.J."/>
            <person name="Wilming L.G."/>
            <person name="Aidinis V."/>
            <person name="Allen J.E."/>
            <person name="Ambesi-Impiombato A."/>
            <person name="Apweiler R."/>
            <person name="Aturaliya R.N."/>
            <person name="Bailey T.L."/>
            <person name="Bansal M."/>
            <person name="Baxter L."/>
            <person name="Beisel K.W."/>
            <person name="Bersano T."/>
            <person name="Bono H."/>
            <person name="Chalk A.M."/>
            <person name="Chiu K.P."/>
            <person name="Choudhary V."/>
            <person name="Christoffels A."/>
            <person name="Clutterbuck D.R."/>
            <person name="Crowe M.L."/>
            <person name="Dalla E."/>
            <person name="Dalrymple B.P."/>
            <person name="de Bono B."/>
            <person name="Della Gatta G."/>
            <person name="di Bernardo D."/>
            <person name="Down T."/>
            <person name="Engstrom P."/>
            <person name="Fagiolini M."/>
            <person name="Faulkner G."/>
            <person name="Fletcher C.F."/>
            <person name="Fukushima T."/>
            <person name="Furuno M."/>
            <person name="Futaki S."/>
            <person name="Gariboldi M."/>
            <person name="Georgii-Hemming P."/>
            <person name="Gingeras T.R."/>
            <person name="Gojobori T."/>
            <person name="Green R.E."/>
            <person name="Gustincich S."/>
            <person name="Harbers M."/>
            <person name="Hayashi Y."/>
            <person name="Hensch T.K."/>
            <person name="Hirokawa N."/>
            <person name="Hill D."/>
            <person name="Huminiecki L."/>
            <person name="Iacono M."/>
            <person name="Ikeo K."/>
            <person name="Iwama A."/>
            <person name="Ishikawa T."/>
            <person name="Jakt M."/>
            <person name="Kanapin A."/>
            <person name="Katoh M."/>
            <person name="Kawasawa Y."/>
            <person name="Kelso J."/>
            <person name="Kitamura H."/>
            <person name="Kitano H."/>
            <person name="Kollias G."/>
            <person name="Krishnan S.P."/>
            <person name="Kruger A."/>
            <person name="Kummerfeld S.K."/>
            <person name="Kurochkin I.V."/>
            <person name="Lareau L.F."/>
            <person name="Lazarevic D."/>
            <person name="Lipovich L."/>
            <person name="Liu J."/>
            <person name="Liuni S."/>
            <person name="McWilliam S."/>
            <person name="Madan Babu M."/>
            <person name="Madera M."/>
            <person name="Marchionni L."/>
            <person name="Matsuda H."/>
            <person name="Matsuzawa S."/>
            <person name="Miki H."/>
            <person name="Mignone F."/>
            <person name="Miyake S."/>
            <person name="Morris K."/>
            <person name="Mottagui-Tabar S."/>
            <person name="Mulder N."/>
            <person name="Nakano N."/>
            <person name="Nakauchi H."/>
            <person name="Ng P."/>
            <person name="Nilsson R."/>
            <person name="Nishiguchi S."/>
            <person name="Nishikawa S."/>
            <person name="Nori F."/>
            <person name="Ohara O."/>
            <person name="Okazaki Y."/>
            <person name="Orlando V."/>
            <person name="Pang K.C."/>
            <person name="Pavan W.J."/>
            <person name="Pavesi G."/>
            <person name="Pesole G."/>
            <person name="Petrovsky N."/>
            <person name="Piazza S."/>
            <person name="Reed J."/>
            <person name="Reid J.F."/>
            <person name="Ring B.Z."/>
            <person name="Ringwald M."/>
            <person name="Rost B."/>
            <person name="Ruan Y."/>
            <person name="Salzberg S.L."/>
            <person name="Sandelin A."/>
            <person name="Schneider C."/>
            <person name="Schoenbach C."/>
            <person name="Sekiguchi K."/>
            <person name="Semple C.A."/>
            <person name="Seno S."/>
            <person name="Sessa L."/>
            <person name="Sheng Y."/>
            <person name="Shibata Y."/>
            <person name="Shimada H."/>
            <person name="Shimada K."/>
            <person name="Silva D."/>
            <person name="Sinclair B."/>
            <person name="Sperling S."/>
            <person name="Stupka E."/>
            <person name="Sugiura K."/>
            <person name="Sultana R."/>
            <person name="Takenaka Y."/>
            <person name="Taki K."/>
            <person name="Tammoja K."/>
            <person name="Tan S.L."/>
            <person name="Tang S."/>
            <person name="Taylor M.S."/>
            <person name="Tegner J."/>
            <person name="Teichmann S.A."/>
            <person name="Ueda H.R."/>
            <person name="van Nimwegen E."/>
            <person name="Verardo R."/>
            <person name="Wei C.L."/>
            <person name="Yagi K."/>
            <person name="Yamanishi H."/>
            <person name="Zabarovsky E."/>
            <person name="Zhu S."/>
            <person name="Zimmer A."/>
            <person name="Hide W."/>
            <person name="Bult C."/>
            <person name="Grimmond S.M."/>
            <person name="Teasdale R.D."/>
            <person name="Liu E.T."/>
            <person name="Brusic V."/>
            <person name="Quackenbush J."/>
            <person name="Wahlestedt C."/>
            <person name="Mattick J.S."/>
            <person name="Hume D.A."/>
            <person name="Kai C."/>
            <person name="Sasaki D."/>
            <person name="Tomaru Y."/>
            <person name="Fukuda S."/>
            <person name="Kanamori-Katayama M."/>
            <person name="Suzuki M."/>
            <person name="Aoki J."/>
            <person name="Arakawa T."/>
            <person name="Iida J."/>
            <person name="Imamura K."/>
            <person name="Itoh M."/>
            <person name="Kato T."/>
            <person name="Kawaji H."/>
            <person name="Kawagashira N."/>
            <person name="Kawashima T."/>
            <person name="Kojima M."/>
            <person name="Kondo S."/>
            <person name="Konno H."/>
            <person name="Nakano K."/>
            <person name="Ninomiya N."/>
            <person name="Nishio T."/>
            <person name="Okada M."/>
            <person name="Plessy C."/>
            <person name="Shibata K."/>
            <person name="Shiraki T."/>
            <person name="Suzuki S."/>
            <person name="Tagami M."/>
            <person name="Waki K."/>
            <person name="Watahiki A."/>
            <person name="Okamura-Oho Y."/>
            <person name="Suzuki H."/>
            <person name="Kawai J."/>
            <person name="Hayashizaki Y."/>
        </authorList>
    </citation>
    <scope>NUCLEOTIDE SEQUENCE [LARGE SCALE MRNA]</scope>
    <source>
        <strain>C57BL/6J</strain>
        <tissue>Inner ear</tissue>
        <tissue>Spinal cord</tissue>
    </source>
</reference>
<reference key="2">
    <citation type="journal article" date="2004" name="Genome Res.">
        <title>The status, quality, and expansion of the NIH full-length cDNA project: the Mammalian Gene Collection (MGC).</title>
        <authorList>
            <consortium name="The MGC Project Team"/>
        </authorList>
    </citation>
    <scope>NUCLEOTIDE SEQUENCE [LARGE SCALE MRNA]</scope>
    <source>
        <strain>FVB/N</strain>
        <tissue>Mammary tumor</tissue>
    </source>
</reference>
<reference key="3">
    <citation type="journal article" date="1996" name="Mol. Cell. Biol.">
        <title>Isolation of a novel retinoic acid-responsive gene by selection of genomic fragments derived from CpG-island-enriched DNA.</title>
        <authorList>
            <person name="Shago M."/>
            <person name="Giguere V."/>
        </authorList>
    </citation>
    <scope>INDUCTION</scope>
</reference>
<reference key="4">
    <citation type="journal article" date="2010" name="Cell">
        <title>A tissue-specific atlas of mouse protein phosphorylation and expression.</title>
        <authorList>
            <person name="Huttlin E.L."/>
            <person name="Jedrychowski M.P."/>
            <person name="Elias J.E."/>
            <person name="Goswami T."/>
            <person name="Rad R."/>
            <person name="Beausoleil S.A."/>
            <person name="Villen J."/>
            <person name="Haas W."/>
            <person name="Sowa M.E."/>
            <person name="Gygi S.P."/>
        </authorList>
    </citation>
    <scope>IDENTIFICATION BY MASS SPECTROMETRY [LARGE SCALE ANALYSIS]</scope>
    <source>
        <tissue>Brain</tissue>
        <tissue>Kidney</tissue>
        <tissue>Liver</tissue>
        <tissue>Spleen</tissue>
        <tissue>Testis</tissue>
    </source>
</reference>
<reference key="5">
    <citation type="journal article" date="2012" name="Mol. Cell">
        <title>Control of proinflammatory gene programs by regulated trimethylation and demethylation of histone H4K20.</title>
        <authorList>
            <person name="Stender J.D."/>
            <person name="Pascual G."/>
            <person name="Liu W."/>
            <person name="Kaikkonen M.U."/>
            <person name="Do K."/>
            <person name="Spann N.J."/>
            <person name="Boutros M."/>
            <person name="Perrimon N."/>
            <person name="Rosenfeld M.G."/>
            <person name="Glass C.K."/>
        </authorList>
    </citation>
    <scope>FUNCTION</scope>
    <scope>CATALYTIC ACTIVITY</scope>
    <scope>INTERACTION WITH N-COR COMPLEX</scope>
</reference>
<reference key="6">
    <citation type="journal article" date="2017" name="Cancer Res.">
        <title>SMYD5 Controls Heterochromatin and Chromosome Integrity during Embryonic Stem Cell Differentiation.</title>
        <authorList>
            <person name="Kidder B.L."/>
            <person name="He R."/>
            <person name="Wangsa D."/>
            <person name="Padilla-Nash H.M."/>
            <person name="Bernardo M.M."/>
            <person name="Sheng S."/>
            <person name="Ried T."/>
            <person name="Zhao K."/>
        </authorList>
    </citation>
    <scope>FUNCTION</scope>
</reference>
<reference key="7">
    <citation type="journal article" date="2017" name="Epigenetics Chromatin">
        <title>SMYD5 regulates H4K20me3-marked heterochromatin to safeguard ES cell self-renewal and prevent spurious differentiation.</title>
        <authorList>
            <person name="Kidder B.L."/>
            <person name="Hu G."/>
            <person name="Cui K."/>
            <person name="Zhao K."/>
        </authorList>
    </citation>
    <scope>FUNCTION</scope>
    <scope>CATALYTIC ACTIVITY</scope>
    <scope>INTERACTION WITH EHMT2 AND CBX5</scope>
</reference>
<reference key="8">
    <citation type="journal article" date="2022" name="Nat. Commun.">
        <title>SMYD5 catalyzes histone H3 lysine 36 trimethylation at promoters.</title>
        <authorList>
            <person name="Zhang Y."/>
            <person name="Fang Y."/>
            <person name="Tang Y."/>
            <person name="Han S."/>
            <person name="Jia J."/>
            <person name="Wan X."/>
            <person name="Chen J."/>
            <person name="Yuan Y."/>
            <person name="Zhao B."/>
            <person name="Fang D."/>
        </authorList>
    </citation>
    <scope>FUNCTION</scope>
    <scope>CATALYTIC ACTIVITY</scope>
</reference>
<reference key="9">
    <citation type="journal article" date="2024" name="Cell Rep.">
        <title>SMYD5 is a regulator of the mild hypothermia response.</title>
        <authorList>
            <person name="Rafnsdottir S."/>
            <person name="Jang K."/>
            <person name="Halldorsdottir S.T."/>
            <person name="Vinod M."/>
            <person name="Tomasdottir A."/>
            <person name="Moeller K."/>
            <person name="Halldorsdottir K."/>
            <person name="Reynisdottir T."/>
            <person name="Atladottir L.H."/>
            <person name="Allison K.E."/>
            <person name="Ostacolo K."/>
            <person name="He J."/>
            <person name="Zhang L."/>
            <person name="Northington F.J."/>
            <person name="Magnusdottir E."/>
            <person name="Chavez-Valdez R."/>
            <person name="Anderson K.J."/>
            <person name="Bjornsson H.T."/>
        </authorList>
    </citation>
    <scope>FUNCTION</scope>
    <scope>CATALYTIC ACTIVITY</scope>
</reference>
<reference key="10">
    <citation type="journal article" date="2024" name="Cell Res.">
        <title>SMYD5 is a ribosomal methyltransferase that catalyzes RPL40 lysine methylation to enhance translation output and promote hepatocellular carcinoma.</title>
        <authorList>
            <person name="Miao B."/>
            <person name="Ge L."/>
            <person name="He C."/>
            <person name="Wang X."/>
            <person name="Wu J."/>
            <person name="Li X."/>
            <person name="Chen K."/>
            <person name="Wan J."/>
            <person name="Xing S."/>
            <person name="Ren L."/>
            <person name="Shi Z."/>
            <person name="Liu S."/>
            <person name="Hu Y."/>
            <person name="Chen J."/>
            <person name="Yu Y."/>
            <person name="Feng L."/>
            <person name="Flores N.M."/>
            <person name="Liang Z."/>
            <person name="Xu X."/>
            <person name="Wang R."/>
            <person name="Zhou J."/>
            <person name="Fan J."/>
            <person name="Xiang B."/>
            <person name="Li E."/>
            <person name="Mao Y."/>
            <person name="Cheng J."/>
            <person name="Zhao K."/>
            <person name="Mazur P.K."/>
            <person name="Cai J."/>
            <person name="Lan F."/>
        </authorList>
    </citation>
    <scope>DISRUPTION PHENOTYPE</scope>
</reference>
<reference key="11">
    <citation type="journal article" date="2024" name="Nature">
        <title>SMYD5 methylation of rpL40 links ribosomal output to gastric cancer.</title>
        <authorList>
            <person name="Park J."/>
            <person name="Wu J."/>
            <person name="Szkop K.J."/>
            <person name="Jeong J."/>
            <person name="Jovanovic P."/>
            <person name="Husmann D."/>
            <person name="Flores N.M."/>
            <person name="Francis J.W."/>
            <person name="Chen Y.C."/>
            <person name="Benitez A.M."/>
            <person name="Zahn E."/>
            <person name="Song S."/>
            <person name="Ajani J.A."/>
            <person name="Wang L."/>
            <person name="Singh K."/>
            <person name="Larsson O."/>
            <person name="Garcia B.A."/>
            <person name="Topisirovic I."/>
            <person name="Gozani O."/>
            <person name="Mazur P.K."/>
        </authorList>
    </citation>
    <scope>DISRUPTION PHENOTYPE</scope>
</reference>
<sequence length="416" mass="47095">MAASMCDVFSFCVGVADRARGSVEVRYVDSIKGKGLFATQLIRKGETIFIERPLVAAQFLWNALYQYRACDHCLRALEKAEENAQRLTGKPSQILPHPELCSVRKDLHQNCPHCQVMYCSAECRLAAAEQYHQILCPGPSHDPRHPLNKLQEAWRSVHYPPETASIMLMARMVATVKQAKDKDHWVRLFNHFCSRTANQEQAIVHKLLKGKFKDQLELLLGLFKEALYEEALSLWFTPEGFRSLFALVGTNGQGIGTSSLSQWVHACDALELTPQDREQLDTFIDQLYKDIEAATGEFLNCEGSGLFVLQSCCNHSCVPNAETSFPENNFVLHVTALEDIKPGEEICISYLDCCQRERSRHSRHKILRENYLFNCSCPKCLAEADDPNVTSEEEEEEDEEEGEPEDAELGDEMTDV</sequence>
<accession>Q3TYX3</accession>
<accession>Q3TRB2</accession>
<accession>Q91YL6</accession>